<protein>
    <recommendedName>
        <fullName evidence="1">Ribosomal RNA large subunit methyltransferase E</fullName>
        <ecNumber evidence="1">2.1.1.166</ecNumber>
    </recommendedName>
    <alternativeName>
        <fullName evidence="1">23S rRNA Um2552 methyltransferase</fullName>
    </alternativeName>
    <alternativeName>
        <fullName evidence="1">rRNA (uridine-2'-O-)-methyltransferase</fullName>
    </alternativeName>
</protein>
<comment type="function">
    <text evidence="1">Specifically methylates the uridine in position 2552 of 23S rRNA at the 2'-O position of the ribose in the fully assembled 50S ribosomal subunit.</text>
</comment>
<comment type="catalytic activity">
    <reaction evidence="1">
        <text>uridine(2552) in 23S rRNA + S-adenosyl-L-methionine = 2'-O-methyluridine(2552) in 23S rRNA + S-adenosyl-L-homocysteine + H(+)</text>
        <dbReference type="Rhea" id="RHEA:42720"/>
        <dbReference type="Rhea" id="RHEA-COMP:10202"/>
        <dbReference type="Rhea" id="RHEA-COMP:10203"/>
        <dbReference type="ChEBI" id="CHEBI:15378"/>
        <dbReference type="ChEBI" id="CHEBI:57856"/>
        <dbReference type="ChEBI" id="CHEBI:59789"/>
        <dbReference type="ChEBI" id="CHEBI:65315"/>
        <dbReference type="ChEBI" id="CHEBI:74478"/>
        <dbReference type="EC" id="2.1.1.166"/>
    </reaction>
</comment>
<comment type="subcellular location">
    <subcellularLocation>
        <location evidence="1">Cytoplasm</location>
    </subcellularLocation>
</comment>
<comment type="similarity">
    <text evidence="1">Belongs to the class I-like SAM-binding methyltransferase superfamily. RNA methyltransferase RlmE family.</text>
</comment>
<feature type="chain" id="PRO_0000155535" description="Ribosomal RNA large subunit methyltransferase E">
    <location>
        <begin position="1"/>
        <end position="227"/>
    </location>
</feature>
<feature type="active site" description="Proton acceptor" evidence="1">
    <location>
        <position position="183"/>
    </location>
</feature>
<feature type="binding site" evidence="1">
    <location>
        <position position="78"/>
    </location>
    <ligand>
        <name>S-adenosyl-L-methionine</name>
        <dbReference type="ChEBI" id="CHEBI:59789"/>
    </ligand>
</feature>
<feature type="binding site" evidence="1">
    <location>
        <position position="80"/>
    </location>
    <ligand>
        <name>S-adenosyl-L-methionine</name>
        <dbReference type="ChEBI" id="CHEBI:59789"/>
    </ligand>
</feature>
<feature type="binding site" evidence="1">
    <location>
        <position position="103"/>
    </location>
    <ligand>
        <name>S-adenosyl-L-methionine</name>
        <dbReference type="ChEBI" id="CHEBI:59789"/>
    </ligand>
</feature>
<feature type="binding site" evidence="1">
    <location>
        <position position="119"/>
    </location>
    <ligand>
        <name>S-adenosyl-L-methionine</name>
        <dbReference type="ChEBI" id="CHEBI:59789"/>
    </ligand>
</feature>
<feature type="binding site" evidence="1">
    <location>
        <position position="143"/>
    </location>
    <ligand>
        <name>S-adenosyl-L-methionine</name>
        <dbReference type="ChEBI" id="CHEBI:59789"/>
    </ligand>
</feature>
<reference key="1">
    <citation type="journal article" date="2004" name="J. Bacteriol.">
        <title>Complete genome sequence of Rickettsia typhi and comparison with sequences of other Rickettsiae.</title>
        <authorList>
            <person name="McLeod M.P."/>
            <person name="Qin X."/>
            <person name="Karpathy S.E."/>
            <person name="Gioia J."/>
            <person name="Highlander S.K."/>
            <person name="Fox G.E."/>
            <person name="McNeill T.Z."/>
            <person name="Jiang H."/>
            <person name="Muzny D."/>
            <person name="Jacob L.S."/>
            <person name="Hawes A.C."/>
            <person name="Sodergren E."/>
            <person name="Gill R."/>
            <person name="Hume J."/>
            <person name="Morgan M."/>
            <person name="Fan G."/>
            <person name="Amin A.G."/>
            <person name="Gibbs R.A."/>
            <person name="Hong C."/>
            <person name="Yu X.-J."/>
            <person name="Walker D.H."/>
            <person name="Weinstock G.M."/>
        </authorList>
    </citation>
    <scope>NUCLEOTIDE SEQUENCE [LARGE SCALE GENOMIC DNA]</scope>
    <source>
        <strain>ATCC VR-144 / Wilmington</strain>
    </source>
</reference>
<gene>
    <name evidence="1" type="primary">rlmE</name>
    <name evidence="1" type="synonym">ftsJ</name>
    <name evidence="1" type="synonym">rrmJ</name>
    <name type="ordered locus">RT0153</name>
</gene>
<proteinExistence type="inferred from homology"/>
<organism>
    <name type="scientific">Rickettsia typhi (strain ATCC VR-144 / Wilmington)</name>
    <dbReference type="NCBI Taxonomy" id="257363"/>
    <lineage>
        <taxon>Bacteria</taxon>
        <taxon>Pseudomonadati</taxon>
        <taxon>Pseudomonadota</taxon>
        <taxon>Alphaproteobacteria</taxon>
        <taxon>Rickettsiales</taxon>
        <taxon>Rickettsiaceae</taxon>
        <taxon>Rickettsieae</taxon>
        <taxon>Rickettsia</taxon>
        <taxon>typhus group</taxon>
    </lineage>
</organism>
<evidence type="ECO:0000255" key="1">
    <source>
        <dbReference type="HAMAP-Rule" id="MF_01547"/>
    </source>
</evidence>
<keyword id="KW-0963">Cytoplasm</keyword>
<keyword id="KW-0489">Methyltransferase</keyword>
<keyword id="KW-0698">rRNA processing</keyword>
<keyword id="KW-0949">S-adenosyl-L-methionine</keyword>
<keyword id="KW-0808">Transferase</keyword>
<name>RLME_RICTY</name>
<accession>Q68XK5</accession>
<dbReference type="EC" id="2.1.1.166" evidence="1"/>
<dbReference type="EMBL" id="AE017197">
    <property type="protein sequence ID" value="AAU03637.1"/>
    <property type="molecule type" value="Genomic_DNA"/>
</dbReference>
<dbReference type="RefSeq" id="WP_011190624.1">
    <property type="nucleotide sequence ID" value="NC_006142.1"/>
</dbReference>
<dbReference type="SMR" id="Q68XK5"/>
<dbReference type="KEGG" id="rty:RT0153"/>
<dbReference type="eggNOG" id="COG0293">
    <property type="taxonomic scope" value="Bacteria"/>
</dbReference>
<dbReference type="HOGENOM" id="CLU_009422_4_0_5"/>
<dbReference type="OrthoDB" id="9790080at2"/>
<dbReference type="Proteomes" id="UP000000604">
    <property type="component" value="Chromosome"/>
</dbReference>
<dbReference type="GO" id="GO:0005737">
    <property type="term" value="C:cytoplasm"/>
    <property type="evidence" value="ECO:0007669"/>
    <property type="project" value="UniProtKB-SubCell"/>
</dbReference>
<dbReference type="GO" id="GO:0008650">
    <property type="term" value="F:rRNA (uridine-2'-O-)-methyltransferase activity"/>
    <property type="evidence" value="ECO:0007669"/>
    <property type="project" value="UniProtKB-UniRule"/>
</dbReference>
<dbReference type="Gene3D" id="3.40.50.150">
    <property type="entry name" value="Vaccinia Virus protein VP39"/>
    <property type="match status" value="1"/>
</dbReference>
<dbReference type="HAMAP" id="MF_01547">
    <property type="entry name" value="RNA_methyltr_E"/>
    <property type="match status" value="1"/>
</dbReference>
<dbReference type="InterPro" id="IPR050082">
    <property type="entry name" value="RNA_methyltr_RlmE"/>
</dbReference>
<dbReference type="InterPro" id="IPR002877">
    <property type="entry name" value="RNA_MeTrfase_FtsJ_dom"/>
</dbReference>
<dbReference type="InterPro" id="IPR015507">
    <property type="entry name" value="rRNA-MeTfrase_E"/>
</dbReference>
<dbReference type="InterPro" id="IPR029063">
    <property type="entry name" value="SAM-dependent_MTases_sf"/>
</dbReference>
<dbReference type="PANTHER" id="PTHR10920">
    <property type="entry name" value="RIBOSOMAL RNA METHYLTRANSFERASE"/>
    <property type="match status" value="1"/>
</dbReference>
<dbReference type="PANTHER" id="PTHR10920:SF18">
    <property type="entry name" value="RRNA METHYLTRANSFERASE 2, MITOCHONDRIAL"/>
    <property type="match status" value="1"/>
</dbReference>
<dbReference type="Pfam" id="PF01728">
    <property type="entry name" value="FtsJ"/>
    <property type="match status" value="1"/>
</dbReference>
<dbReference type="PIRSF" id="PIRSF005461">
    <property type="entry name" value="23S_rRNA_mtase"/>
    <property type="match status" value="1"/>
</dbReference>
<dbReference type="SUPFAM" id="SSF53335">
    <property type="entry name" value="S-adenosyl-L-methionine-dependent methyltransferases"/>
    <property type="match status" value="1"/>
</dbReference>
<sequence>MTNNLSGYRNKIVRVKTAKKRPISSSNWLRRQLNDPYVAKARLEGFRSRAAYKLLEIHDKFRLFTPNMKIVDLGAAPGGWSQVASKLIKASDNNLNNKIISIDLLKIEPIVGVEFLQKDFFEKDTEELIIHGLDGKADLVMSDMASNTIGHKATDHIRTLLLCEQAFEFALKVLKPSCHFIAKIFRGGAETALLNKVKREFRTVKHFKPVSSRSESTEIYLVALNKK</sequence>